<sequence>MNRIETAFKNTKPFIGYLTGGDGGFDYSVACAHALLRGGVDILEIGFPFSDPVADGPIIQKAHTRALKEKTDSTTILEIAKALRQTSDIPLVLFSYYNPLLQKGPQYLHQLKAAGFDAVLTVDLPIPRNANESESFFQALMEAKLFPILLVTPSTQEERLLQISKLAKGFLYYVSHKGTTGIRSKLSDDFSTQIARLRRYFQIPIVAGFGIANRASAIAALEHADGFVVGSAFVEKLEKKISPEELTTFAQSIDPRQ</sequence>
<name>TRPA_CHLFF</name>
<comment type="function">
    <text evidence="1">The alpha subunit is responsible for the aldol cleavage of indoleglycerol phosphate to indole and glyceraldehyde 3-phosphate.</text>
</comment>
<comment type="catalytic activity">
    <reaction evidence="1">
        <text>(1S,2R)-1-C-(indol-3-yl)glycerol 3-phosphate + L-serine = D-glyceraldehyde 3-phosphate + L-tryptophan + H2O</text>
        <dbReference type="Rhea" id="RHEA:10532"/>
        <dbReference type="ChEBI" id="CHEBI:15377"/>
        <dbReference type="ChEBI" id="CHEBI:33384"/>
        <dbReference type="ChEBI" id="CHEBI:57912"/>
        <dbReference type="ChEBI" id="CHEBI:58866"/>
        <dbReference type="ChEBI" id="CHEBI:59776"/>
        <dbReference type="EC" id="4.2.1.20"/>
    </reaction>
</comment>
<comment type="pathway">
    <text evidence="1">Amino-acid biosynthesis; L-tryptophan biosynthesis; L-tryptophan from chorismate: step 5/5.</text>
</comment>
<comment type="subunit">
    <text evidence="1">Tetramer of two alpha and two beta chains.</text>
</comment>
<comment type="similarity">
    <text evidence="1">Belongs to the TrpA family.</text>
</comment>
<dbReference type="EC" id="4.2.1.20" evidence="1"/>
<dbReference type="EMBL" id="AP006861">
    <property type="protein sequence ID" value="BAE81207.1"/>
    <property type="molecule type" value="Genomic_DNA"/>
</dbReference>
<dbReference type="RefSeq" id="WP_011457987.1">
    <property type="nucleotide sequence ID" value="NC_007899.1"/>
</dbReference>
<dbReference type="SMR" id="Q254T1"/>
<dbReference type="STRING" id="264202.CF0435"/>
<dbReference type="KEGG" id="cfe:CF0435"/>
<dbReference type="eggNOG" id="COG0159">
    <property type="taxonomic scope" value="Bacteria"/>
</dbReference>
<dbReference type="HOGENOM" id="CLU_016734_0_0_0"/>
<dbReference type="OrthoDB" id="9804578at2"/>
<dbReference type="UniPathway" id="UPA00035">
    <property type="reaction ID" value="UER00044"/>
</dbReference>
<dbReference type="Proteomes" id="UP000001260">
    <property type="component" value="Chromosome"/>
</dbReference>
<dbReference type="GO" id="GO:0005829">
    <property type="term" value="C:cytosol"/>
    <property type="evidence" value="ECO:0007669"/>
    <property type="project" value="TreeGrafter"/>
</dbReference>
<dbReference type="GO" id="GO:0004834">
    <property type="term" value="F:tryptophan synthase activity"/>
    <property type="evidence" value="ECO:0007669"/>
    <property type="project" value="UniProtKB-UniRule"/>
</dbReference>
<dbReference type="CDD" id="cd04724">
    <property type="entry name" value="Tryptophan_synthase_alpha"/>
    <property type="match status" value="1"/>
</dbReference>
<dbReference type="Gene3D" id="3.20.20.70">
    <property type="entry name" value="Aldolase class I"/>
    <property type="match status" value="1"/>
</dbReference>
<dbReference type="HAMAP" id="MF_00131">
    <property type="entry name" value="Trp_synth_alpha"/>
    <property type="match status" value="1"/>
</dbReference>
<dbReference type="InterPro" id="IPR013785">
    <property type="entry name" value="Aldolase_TIM"/>
</dbReference>
<dbReference type="InterPro" id="IPR011060">
    <property type="entry name" value="RibuloseP-bd_barrel"/>
</dbReference>
<dbReference type="InterPro" id="IPR018204">
    <property type="entry name" value="Trp_synthase_alpha_AS"/>
</dbReference>
<dbReference type="InterPro" id="IPR002028">
    <property type="entry name" value="Trp_synthase_suA"/>
</dbReference>
<dbReference type="NCBIfam" id="TIGR00262">
    <property type="entry name" value="trpA"/>
    <property type="match status" value="1"/>
</dbReference>
<dbReference type="PANTHER" id="PTHR43406:SF1">
    <property type="entry name" value="TRYPTOPHAN SYNTHASE ALPHA CHAIN, CHLOROPLASTIC"/>
    <property type="match status" value="1"/>
</dbReference>
<dbReference type="PANTHER" id="PTHR43406">
    <property type="entry name" value="TRYPTOPHAN SYNTHASE, ALPHA CHAIN"/>
    <property type="match status" value="1"/>
</dbReference>
<dbReference type="Pfam" id="PF00290">
    <property type="entry name" value="Trp_syntA"/>
    <property type="match status" value="1"/>
</dbReference>
<dbReference type="SUPFAM" id="SSF51366">
    <property type="entry name" value="Ribulose-phoshate binding barrel"/>
    <property type="match status" value="1"/>
</dbReference>
<dbReference type="PROSITE" id="PS00167">
    <property type="entry name" value="TRP_SYNTHASE_ALPHA"/>
    <property type="match status" value="1"/>
</dbReference>
<protein>
    <recommendedName>
        <fullName evidence="1">Tryptophan synthase alpha chain</fullName>
        <ecNumber evidence="1">4.2.1.20</ecNumber>
    </recommendedName>
</protein>
<accession>Q254T1</accession>
<gene>
    <name evidence="1" type="primary">trpA</name>
    <name type="ordered locus">CF0435</name>
</gene>
<feature type="chain" id="PRO_1000018187" description="Tryptophan synthase alpha chain">
    <location>
        <begin position="1"/>
        <end position="257"/>
    </location>
</feature>
<feature type="active site" description="Proton acceptor" evidence="1">
    <location>
        <position position="44"/>
    </location>
</feature>
<feature type="active site" description="Proton acceptor" evidence="1">
    <location>
        <position position="55"/>
    </location>
</feature>
<reference key="1">
    <citation type="journal article" date="2006" name="DNA Res.">
        <title>Genome sequence of the cat pathogen, Chlamydophila felis.</title>
        <authorList>
            <person name="Azuma Y."/>
            <person name="Hirakawa H."/>
            <person name="Yamashita A."/>
            <person name="Cai Y."/>
            <person name="Rahman M.A."/>
            <person name="Suzuki H."/>
            <person name="Mitaku S."/>
            <person name="Toh H."/>
            <person name="Goto S."/>
            <person name="Murakami T."/>
            <person name="Sugi K."/>
            <person name="Hayashi H."/>
            <person name="Fukushi H."/>
            <person name="Hattori M."/>
            <person name="Kuhara S."/>
            <person name="Shirai M."/>
        </authorList>
    </citation>
    <scope>NUCLEOTIDE SEQUENCE [LARGE SCALE GENOMIC DNA]</scope>
    <source>
        <strain>Fe/C-56</strain>
    </source>
</reference>
<evidence type="ECO:0000255" key="1">
    <source>
        <dbReference type="HAMAP-Rule" id="MF_00131"/>
    </source>
</evidence>
<proteinExistence type="inferred from homology"/>
<keyword id="KW-0028">Amino-acid biosynthesis</keyword>
<keyword id="KW-0057">Aromatic amino acid biosynthesis</keyword>
<keyword id="KW-0456">Lyase</keyword>
<keyword id="KW-0822">Tryptophan biosynthesis</keyword>
<organism>
    <name type="scientific">Chlamydia felis (strain Fe/C-56)</name>
    <name type="common">Chlamydophila felis</name>
    <dbReference type="NCBI Taxonomy" id="264202"/>
    <lineage>
        <taxon>Bacteria</taxon>
        <taxon>Pseudomonadati</taxon>
        <taxon>Chlamydiota</taxon>
        <taxon>Chlamydiia</taxon>
        <taxon>Chlamydiales</taxon>
        <taxon>Chlamydiaceae</taxon>
        <taxon>Chlamydia/Chlamydophila group</taxon>
        <taxon>Chlamydia</taxon>
    </lineage>
</organism>